<comment type="function">
    <text evidence="2 3">Cytokine that binds to TNFRSF1A/TNFR1 and TNFRSF1B/TNFBR. It is mainly secreted by macrophages and can induce cell death of certain tumor cell lines. It is potent pyrogen causing fever by direct action or by stimulation of interleukin-1 secretion and is implicated in the induction of cachexia, Under certain conditions it can stimulate cell proliferation and induce cell differentiation (By similarity). Induces insulin resistance in adipocytes via inhibition of insulin-induced IRS1 tyrosine phosphorylation and insulin-induced glucose uptake. Induces GKAP42 protein degradation in adipocytes which is partially responsible for TNF-induced insulin resistance (By similarity). Plays a role in angiogenesis by inducing VEGF production synergistically with IL1B and IL6 (By similarity). Promotes osteoclastogenesis and therefore mediates bone resorption (By similarity).</text>
</comment>
<comment type="function">
    <text evidence="2">The TNF intracellular domain (ICD) form induces IL12 production in dendritic cells.</text>
</comment>
<comment type="subunit">
    <text evidence="1">Homotrimer. Interacts with SPPL2B (By similarity).</text>
</comment>
<comment type="subcellular location">
    <subcellularLocation>
        <location evidence="1">Cell membrane</location>
        <topology evidence="1">Single-pass type II membrane protein</topology>
    </subcellularLocation>
</comment>
<comment type="subcellular location">
    <molecule>Tumor necrosis factor, membrane form</molecule>
    <subcellularLocation>
        <location evidence="1">Membrane</location>
        <topology evidence="1">Single-pass type II membrane protein</topology>
    </subcellularLocation>
</comment>
<comment type="subcellular location">
    <molecule>Tumor necrosis factor, soluble form</molecule>
    <subcellularLocation>
        <location evidence="1">Secreted</location>
    </subcellularLocation>
</comment>
<comment type="subcellular location">
    <molecule>C-domain 1</molecule>
    <subcellularLocation>
        <location evidence="1">Secreted</location>
    </subcellularLocation>
</comment>
<comment type="subcellular location">
    <molecule>C-domain 2</molecule>
    <subcellularLocation>
        <location evidence="1">Secreted</location>
    </subcellularLocation>
</comment>
<comment type="PTM">
    <text evidence="1">The soluble form derives from the membrane form by proteolytic processing. The membrane-bound form is further proteolytically processed by SPPL2A or SPPL2B through regulated intramembrane proteolysis producing TNF intracellular domains (ICD1 and ICD2) released in the cytosol and TNF C-domain 1 and C-domain 2 secreted into the extracellular space (By similarity).</text>
</comment>
<comment type="PTM">
    <text evidence="1">The membrane form, but not the soluble form, is phosphorylated on serine residues. Dephosphorylation of the membrane form occurs by binding to soluble TNFRSF1A/TNFR1 (By similarity).</text>
</comment>
<comment type="PTM">
    <text evidence="1">O-glycosylated; glycans contain galactose, N-acetylgalactosamine and N-acetylneuraminic acid.</text>
</comment>
<comment type="PTM">
    <molecule>Tumor necrosis factor, soluble form</molecule>
    <text evidence="2">The soluble form is demyristoylated by SIRT6, promoting its secretion.</text>
</comment>
<comment type="similarity">
    <text evidence="6">Belongs to the tumor necrosis factor family.</text>
</comment>
<name>TNFA_CAVPO</name>
<proteinExistence type="evidence at transcript level"/>
<dbReference type="EMBL" id="U39839">
    <property type="protein sequence ID" value="AAB06492.1"/>
    <property type="molecule type" value="mRNA"/>
</dbReference>
<dbReference type="EMBL" id="U77036">
    <property type="protein sequence ID" value="AAB19210.1"/>
    <property type="molecule type" value="mRNA"/>
</dbReference>
<dbReference type="RefSeq" id="NP_001166496.1">
    <property type="nucleotide sequence ID" value="NM_001173025.1"/>
</dbReference>
<dbReference type="SMR" id="P51435"/>
<dbReference type="FunCoup" id="P51435">
    <property type="interactions" value="1276"/>
</dbReference>
<dbReference type="STRING" id="10141.ENSCPOP00000002129"/>
<dbReference type="GeneID" id="100135630"/>
<dbReference type="KEGG" id="cpoc:100135630"/>
<dbReference type="CTD" id="7124"/>
<dbReference type="eggNOG" id="ENOG502S4K8">
    <property type="taxonomic scope" value="Eukaryota"/>
</dbReference>
<dbReference type="HOGENOM" id="CLU_070352_3_1_1"/>
<dbReference type="InParanoid" id="P51435"/>
<dbReference type="OrthoDB" id="9940698at2759"/>
<dbReference type="TreeFam" id="TF332169"/>
<dbReference type="Proteomes" id="UP000005447">
    <property type="component" value="Unassembled WGS sequence"/>
</dbReference>
<dbReference type="GO" id="GO:0009986">
    <property type="term" value="C:cell surface"/>
    <property type="evidence" value="ECO:0007669"/>
    <property type="project" value="TreeGrafter"/>
</dbReference>
<dbReference type="GO" id="GO:0005615">
    <property type="term" value="C:extracellular space"/>
    <property type="evidence" value="ECO:0007669"/>
    <property type="project" value="UniProtKB-KW"/>
</dbReference>
<dbReference type="GO" id="GO:0005886">
    <property type="term" value="C:plasma membrane"/>
    <property type="evidence" value="ECO:0007669"/>
    <property type="project" value="UniProtKB-SubCell"/>
</dbReference>
<dbReference type="GO" id="GO:0005125">
    <property type="term" value="F:cytokine activity"/>
    <property type="evidence" value="ECO:0007669"/>
    <property type="project" value="UniProtKB-KW"/>
</dbReference>
<dbReference type="GO" id="GO:0005164">
    <property type="term" value="F:tumor necrosis factor receptor binding"/>
    <property type="evidence" value="ECO:0007669"/>
    <property type="project" value="InterPro"/>
</dbReference>
<dbReference type="GO" id="GO:0008625">
    <property type="term" value="P:extrinsic apoptotic signaling pathway via death domain receptors"/>
    <property type="evidence" value="ECO:0007669"/>
    <property type="project" value="TreeGrafter"/>
</dbReference>
<dbReference type="GO" id="GO:0006955">
    <property type="term" value="P:immune response"/>
    <property type="evidence" value="ECO:0007669"/>
    <property type="project" value="InterPro"/>
</dbReference>
<dbReference type="GO" id="GO:0097527">
    <property type="term" value="P:necroptotic signaling pathway"/>
    <property type="evidence" value="ECO:0000250"/>
    <property type="project" value="CAFA"/>
</dbReference>
<dbReference type="GO" id="GO:0043242">
    <property type="term" value="P:negative regulation of protein-containing complex disassembly"/>
    <property type="evidence" value="ECO:0000250"/>
    <property type="project" value="UniProtKB"/>
</dbReference>
<dbReference type="GO" id="GO:0043065">
    <property type="term" value="P:positive regulation of apoptotic process"/>
    <property type="evidence" value="ECO:0000250"/>
    <property type="project" value="UniProtKB"/>
</dbReference>
<dbReference type="GO" id="GO:0043123">
    <property type="term" value="P:positive regulation of canonical NF-kappaB signal transduction"/>
    <property type="evidence" value="ECO:0007669"/>
    <property type="project" value="TreeGrafter"/>
</dbReference>
<dbReference type="GO" id="GO:2001238">
    <property type="term" value="P:positive regulation of extrinsic apoptotic signaling pathway"/>
    <property type="evidence" value="ECO:0007669"/>
    <property type="project" value="TreeGrafter"/>
</dbReference>
<dbReference type="GO" id="GO:0043507">
    <property type="term" value="P:positive regulation of JUN kinase activity"/>
    <property type="evidence" value="ECO:0000250"/>
    <property type="project" value="UniProtKB"/>
</dbReference>
<dbReference type="GO" id="GO:0043406">
    <property type="term" value="P:positive regulation of MAP kinase activity"/>
    <property type="evidence" value="ECO:0000250"/>
    <property type="project" value="UniProtKB"/>
</dbReference>
<dbReference type="GO" id="GO:0051092">
    <property type="term" value="P:positive regulation of NF-kappaB transcription factor activity"/>
    <property type="evidence" value="ECO:0000250"/>
    <property type="project" value="UniProtKB"/>
</dbReference>
<dbReference type="GO" id="GO:0001934">
    <property type="term" value="P:positive regulation of protein phosphorylation"/>
    <property type="evidence" value="ECO:0000250"/>
    <property type="project" value="UniProtKB"/>
</dbReference>
<dbReference type="GO" id="GO:0043243">
    <property type="term" value="P:positive regulation of protein-containing complex disassembly"/>
    <property type="evidence" value="ECO:0000250"/>
    <property type="project" value="UniProtKB"/>
</dbReference>
<dbReference type="GO" id="GO:0045944">
    <property type="term" value="P:positive regulation of transcription by RNA polymerase II"/>
    <property type="evidence" value="ECO:0007669"/>
    <property type="project" value="TreeGrafter"/>
</dbReference>
<dbReference type="GO" id="GO:0065008">
    <property type="term" value="P:regulation of biological quality"/>
    <property type="evidence" value="ECO:0007669"/>
    <property type="project" value="UniProtKB-ARBA"/>
</dbReference>
<dbReference type="GO" id="GO:0050793">
    <property type="term" value="P:regulation of developmental process"/>
    <property type="evidence" value="ECO:0007669"/>
    <property type="project" value="UniProtKB-ARBA"/>
</dbReference>
<dbReference type="GO" id="GO:0051239">
    <property type="term" value="P:regulation of multicellular organismal process"/>
    <property type="evidence" value="ECO:0007669"/>
    <property type="project" value="UniProtKB-ARBA"/>
</dbReference>
<dbReference type="GO" id="GO:0051046">
    <property type="term" value="P:regulation of secretion"/>
    <property type="evidence" value="ECO:0007669"/>
    <property type="project" value="UniProtKB-ARBA"/>
</dbReference>
<dbReference type="GO" id="GO:0033209">
    <property type="term" value="P:tumor necrosis factor-mediated signaling pathway"/>
    <property type="evidence" value="ECO:0007669"/>
    <property type="project" value="TreeGrafter"/>
</dbReference>
<dbReference type="GO" id="GO:0010573">
    <property type="term" value="P:vascular endothelial growth factor production"/>
    <property type="evidence" value="ECO:0000250"/>
    <property type="project" value="UniProtKB"/>
</dbReference>
<dbReference type="CDD" id="cd00184">
    <property type="entry name" value="TNF"/>
    <property type="match status" value="1"/>
</dbReference>
<dbReference type="FunFam" id="2.60.120.40:FF:000007">
    <property type="entry name" value="Tumor necrosis factor"/>
    <property type="match status" value="1"/>
</dbReference>
<dbReference type="Gene3D" id="2.60.120.40">
    <property type="match status" value="1"/>
</dbReference>
<dbReference type="InterPro" id="IPR006053">
    <property type="entry name" value="TNF"/>
</dbReference>
<dbReference type="InterPro" id="IPR002959">
    <property type="entry name" value="TNF_alpha"/>
</dbReference>
<dbReference type="InterPro" id="IPR021184">
    <property type="entry name" value="TNF_CS"/>
</dbReference>
<dbReference type="InterPro" id="IPR006052">
    <property type="entry name" value="TNF_dom"/>
</dbReference>
<dbReference type="InterPro" id="IPR008983">
    <property type="entry name" value="Tumour_necrosis_fac-like_dom"/>
</dbReference>
<dbReference type="PANTHER" id="PTHR11471:SF23">
    <property type="entry name" value="TUMOR NECROSIS FACTOR"/>
    <property type="match status" value="1"/>
</dbReference>
<dbReference type="PANTHER" id="PTHR11471">
    <property type="entry name" value="TUMOR NECROSIS FACTOR FAMILY MEMBER"/>
    <property type="match status" value="1"/>
</dbReference>
<dbReference type="Pfam" id="PF00229">
    <property type="entry name" value="TNF"/>
    <property type="match status" value="1"/>
</dbReference>
<dbReference type="PRINTS" id="PR01234">
    <property type="entry name" value="TNECROSISFCT"/>
</dbReference>
<dbReference type="PRINTS" id="PR01235">
    <property type="entry name" value="TNFALPHA"/>
</dbReference>
<dbReference type="SMART" id="SM00207">
    <property type="entry name" value="TNF"/>
    <property type="match status" value="1"/>
</dbReference>
<dbReference type="SUPFAM" id="SSF49842">
    <property type="entry name" value="TNF-like"/>
    <property type="match status" value="1"/>
</dbReference>
<dbReference type="PROSITE" id="PS00251">
    <property type="entry name" value="THD_1"/>
    <property type="match status" value="1"/>
</dbReference>
<dbReference type="PROSITE" id="PS50049">
    <property type="entry name" value="THD_2"/>
    <property type="match status" value="1"/>
</dbReference>
<feature type="chain" id="PRO_0000034413" description="Tumor necrosis factor, membrane form">
    <location>
        <begin position="1"/>
        <end position="234"/>
    </location>
</feature>
<feature type="chain" id="PRO_0000417207" description="Intracellular domain 1" evidence="1">
    <location>
        <begin position="1"/>
        <end position="39"/>
    </location>
</feature>
<feature type="chain" id="PRO_0000417208" description="Intracellular domain 2" evidence="1">
    <location>
        <begin position="1"/>
        <end position="35"/>
    </location>
</feature>
<feature type="chain" id="PRO_0000417209" description="C-domain 1" evidence="1">
    <location>
        <begin position="50"/>
        <end status="unknown"/>
    </location>
</feature>
<feature type="chain" id="PRO_0000417210" description="C-domain 2" evidence="1">
    <location>
        <begin position="52"/>
        <end status="unknown"/>
    </location>
</feature>
<feature type="chain" id="PRO_0000034414" description="Tumor necrosis factor, soluble form">
    <location>
        <begin position="80"/>
        <end position="234"/>
    </location>
</feature>
<feature type="topological domain" description="Cytoplasmic" evidence="4">
    <location>
        <begin position="1"/>
        <end position="35"/>
    </location>
</feature>
<feature type="transmembrane region" description="Helical; Signal-anchor for type II membrane protein" evidence="4">
    <location>
        <begin position="36"/>
        <end position="56"/>
    </location>
</feature>
<feature type="topological domain" description="Extracellular" evidence="4">
    <location>
        <begin position="57"/>
        <end position="234"/>
    </location>
</feature>
<feature type="domain" description="THD" evidence="5">
    <location>
        <begin position="90"/>
        <end position="234"/>
    </location>
</feature>
<feature type="site" description="Cleavage; by SPPL2A or SPPL2B" evidence="1">
    <location>
        <begin position="34"/>
        <end position="35"/>
    </location>
</feature>
<feature type="site" description="Cleavage; by SPPL2A or SPPL2B" evidence="1">
    <location>
        <begin position="39"/>
        <end position="40"/>
    </location>
</feature>
<feature type="site" description="Cleavage; by SPPL2A or SPPL2B" evidence="1">
    <location>
        <begin position="49"/>
        <end position="50"/>
    </location>
</feature>
<feature type="site" description="Cleavage; by SPPL2A or SPPL2B" evidence="1">
    <location>
        <begin position="51"/>
        <end position="52"/>
    </location>
</feature>
<feature type="site" description="Cleavage; by ADAM17" evidence="1">
    <location>
        <begin position="79"/>
        <end position="80"/>
    </location>
</feature>
<feature type="modified residue" description="Phosphoserine; by CK1" evidence="1">
    <location>
        <position position="2"/>
    </location>
</feature>
<feature type="lipid moiety-binding region" description="N6-myristoyl lysine" evidence="2">
    <location>
        <position position="19"/>
    </location>
</feature>
<feature type="lipid moiety-binding region" description="N6-myristoyl lysine" evidence="2">
    <location>
        <position position="20"/>
    </location>
</feature>
<feature type="disulfide bond" evidence="5">
    <location>
        <begin position="147"/>
        <end position="178"/>
    </location>
</feature>
<evidence type="ECO:0000250" key="1"/>
<evidence type="ECO:0000250" key="2">
    <source>
        <dbReference type="UniProtKB" id="P01375"/>
    </source>
</evidence>
<evidence type="ECO:0000250" key="3">
    <source>
        <dbReference type="UniProtKB" id="P06804"/>
    </source>
</evidence>
<evidence type="ECO:0000255" key="4"/>
<evidence type="ECO:0000255" key="5">
    <source>
        <dbReference type="PROSITE-ProRule" id="PRU01387"/>
    </source>
</evidence>
<evidence type="ECO:0000305" key="6"/>
<accession>P51435</accession>
<organism>
    <name type="scientific">Cavia porcellus</name>
    <name type="common">Guinea pig</name>
    <dbReference type="NCBI Taxonomy" id="10141"/>
    <lineage>
        <taxon>Eukaryota</taxon>
        <taxon>Metazoa</taxon>
        <taxon>Chordata</taxon>
        <taxon>Craniata</taxon>
        <taxon>Vertebrata</taxon>
        <taxon>Euteleostomi</taxon>
        <taxon>Mammalia</taxon>
        <taxon>Eutheria</taxon>
        <taxon>Euarchontoglires</taxon>
        <taxon>Glires</taxon>
        <taxon>Rodentia</taxon>
        <taxon>Hystricomorpha</taxon>
        <taxon>Caviidae</taxon>
        <taxon>Cavia</taxon>
    </lineage>
</organism>
<reference key="1">
    <citation type="submission" date="1995-11" db="EMBL/GenBank/DDBJ databases">
        <title>Cloning and characterisation of guinea pig TNF-alpha cDNA.</title>
        <authorList>
            <person name="Yuan H.T."/>
            <person name="Kelly F.J."/>
            <person name="Bingle C.D."/>
        </authorList>
    </citation>
    <scope>NUCLEOTIDE SEQUENCE [MRNA]</scope>
    <source>
        <strain>Hartley</strain>
        <tissue>Lung</tissue>
    </source>
</reference>
<reference key="2">
    <citation type="journal article" date="1997" name="Am. J. Physiol.">
        <title>Airway inflammation induced by recombinant guinea pig tumor necrosis factor-alpha.</title>
        <authorList>
            <person name="White A.M."/>
            <person name="Yoshimura T."/>
            <person name="Smith A.W."/>
            <person name="Westwick J."/>
            <person name="Watson M.L."/>
        </authorList>
    </citation>
    <scope>NUCLEOTIDE SEQUENCE [MRNA]</scope>
    <source>
        <strain>Dunkin-Hartley</strain>
    </source>
</reference>
<keyword id="KW-1003">Cell membrane</keyword>
<keyword id="KW-0202">Cytokine</keyword>
<keyword id="KW-1015">Disulfide bond</keyword>
<keyword id="KW-0449">Lipoprotein</keyword>
<keyword id="KW-0472">Membrane</keyword>
<keyword id="KW-0519">Myristate</keyword>
<keyword id="KW-0597">Phosphoprotein</keyword>
<keyword id="KW-1185">Reference proteome</keyword>
<keyword id="KW-0964">Secreted</keyword>
<keyword id="KW-0735">Signal-anchor</keyword>
<keyword id="KW-0812">Transmembrane</keyword>
<keyword id="KW-1133">Transmembrane helix</keyword>
<gene>
    <name type="primary">TNF</name>
    <name type="synonym">TNFA</name>
    <name type="synonym">TNFSF2</name>
</gene>
<protein>
    <recommendedName>
        <fullName>Tumor necrosis factor</fullName>
    </recommendedName>
    <alternativeName>
        <fullName>Cachectin</fullName>
    </alternativeName>
    <alternativeName>
        <fullName>TNF-alpha</fullName>
    </alternativeName>
    <alternativeName>
        <fullName>Tumor necrosis factor ligand superfamily member 2</fullName>
        <shortName>TNF-a</shortName>
    </alternativeName>
    <component>
        <recommendedName>
            <fullName>Tumor necrosis factor, membrane form</fullName>
        </recommendedName>
        <alternativeName>
            <fullName>N-terminal fragment</fullName>
            <shortName>NTF</shortName>
        </alternativeName>
    </component>
    <component>
        <recommendedName>
            <fullName>Intracellular domain 1</fullName>
            <shortName>ICD1</shortName>
        </recommendedName>
    </component>
    <component>
        <recommendedName>
            <fullName>Intracellular domain 2</fullName>
            <shortName>ICD2</shortName>
        </recommendedName>
    </component>
    <component>
        <recommendedName>
            <fullName>C-domain 1</fullName>
        </recommendedName>
    </component>
    <component>
        <recommendedName>
            <fullName>C-domain 2</fullName>
        </recommendedName>
    </component>
    <component>
        <recommendedName>
            <fullName>Tumor necrosis factor, soluble form</fullName>
        </recommendedName>
    </component>
</protein>
<sequence>MSTESMIRDVELAEEQLPKKAGGPQGSRRCWCLSLFSFLLVAGATTLFCLLHFGVIGPQREEQFSSGPPFRPLAQTLTLRSASQNDNDKPVAHVVANQQAEEELQWLSKRANALLANGMGLSDNQLVVPSDGLYLIYSQVLFKGQGCPSYLLLTHTVSRLAVSYPEKVNLLSAIKSPCQKETPEGAERKPWYEPIYLGGVFQLQKGDRLSAEVNLPQYLDFADSGQIYFGVIAL</sequence>